<sequence length="404" mass="44950">MKLPIYLDYSATTPVDPRVAEKMMQCLTLDGTFGNPASRSHRFGWQAEEAVDIARNQIAELVGADPREIVFTSGATEADNLAIKGAANFYQKKGKHIITSKTEHKAVLDTCRQLEREGFDVTYLAPQRNGIIDLVELEAAMREDTILVSIMHVNNEIGVVQDIAAIGEMCRSRGIVFHVDATQSVGKLPIDLSQLKVDLMSFSGHKIYGPKGIGALYVRRKPRIRLEAQMHGGGHERGMRSGTLPVHQIVGMGEAYRIAKEEMTAEMDRLSMLRDRLWNGINDIEEVYLNGDIEQGVPNILNVSFNYVEGESLIMALKDLAVSSGSACTSASLEPSYVLRALGMNDELAHSSIRFSLGRFTTEEEIDYTIELVRKSIGRLRDLSPLWEMFKQGVDISSIEWAHH</sequence>
<feature type="chain" id="PRO_1000019410" description="Cysteine desulfurase IscS">
    <location>
        <begin position="1"/>
        <end position="404"/>
    </location>
</feature>
<feature type="active site" description="Cysteine persulfide intermediate" evidence="1">
    <location>
        <position position="328"/>
    </location>
</feature>
<feature type="binding site" evidence="1">
    <location>
        <begin position="75"/>
        <end position="76"/>
    </location>
    <ligand>
        <name>pyridoxal 5'-phosphate</name>
        <dbReference type="ChEBI" id="CHEBI:597326"/>
    </ligand>
</feature>
<feature type="binding site" evidence="1">
    <location>
        <position position="155"/>
    </location>
    <ligand>
        <name>pyridoxal 5'-phosphate</name>
        <dbReference type="ChEBI" id="CHEBI:597326"/>
    </ligand>
</feature>
<feature type="binding site" evidence="1">
    <location>
        <position position="183"/>
    </location>
    <ligand>
        <name>pyridoxal 5'-phosphate</name>
        <dbReference type="ChEBI" id="CHEBI:597326"/>
    </ligand>
</feature>
<feature type="binding site" evidence="1">
    <location>
        <begin position="203"/>
        <end position="205"/>
    </location>
    <ligand>
        <name>pyridoxal 5'-phosphate</name>
        <dbReference type="ChEBI" id="CHEBI:597326"/>
    </ligand>
</feature>
<feature type="binding site" evidence="1">
    <location>
        <position position="243"/>
    </location>
    <ligand>
        <name>pyridoxal 5'-phosphate</name>
        <dbReference type="ChEBI" id="CHEBI:597326"/>
    </ligand>
</feature>
<feature type="binding site" description="via persulfide group" evidence="1">
    <location>
        <position position="328"/>
    </location>
    <ligand>
        <name>[2Fe-2S] cluster</name>
        <dbReference type="ChEBI" id="CHEBI:190135"/>
        <note>ligand shared with IscU</note>
    </ligand>
</feature>
<feature type="modified residue" description="N6-(pyridoxal phosphate)lysine" evidence="1">
    <location>
        <position position="206"/>
    </location>
</feature>
<evidence type="ECO:0000255" key="1">
    <source>
        <dbReference type="HAMAP-Rule" id="MF_00331"/>
    </source>
</evidence>
<dbReference type="EC" id="2.8.1.7" evidence="1"/>
<dbReference type="EMBL" id="BX950851">
    <property type="protein sequence ID" value="CAG76135.1"/>
    <property type="molecule type" value="Genomic_DNA"/>
</dbReference>
<dbReference type="RefSeq" id="WP_011094756.1">
    <property type="nucleotide sequence ID" value="NC_004547.2"/>
</dbReference>
<dbReference type="SMR" id="Q6D259"/>
<dbReference type="STRING" id="218491.ECA3237"/>
<dbReference type="KEGG" id="eca:ECA3237"/>
<dbReference type="PATRIC" id="fig|218491.5.peg.3279"/>
<dbReference type="eggNOG" id="COG1104">
    <property type="taxonomic scope" value="Bacteria"/>
</dbReference>
<dbReference type="HOGENOM" id="CLU_003433_0_2_6"/>
<dbReference type="OrthoDB" id="9808002at2"/>
<dbReference type="UniPathway" id="UPA00266"/>
<dbReference type="Proteomes" id="UP000007966">
    <property type="component" value="Chromosome"/>
</dbReference>
<dbReference type="GO" id="GO:1990221">
    <property type="term" value="C:L-cysteine desulfurase complex"/>
    <property type="evidence" value="ECO:0007669"/>
    <property type="project" value="UniProtKB-ARBA"/>
</dbReference>
<dbReference type="GO" id="GO:0051537">
    <property type="term" value="F:2 iron, 2 sulfur cluster binding"/>
    <property type="evidence" value="ECO:0007669"/>
    <property type="project" value="UniProtKB-UniRule"/>
</dbReference>
<dbReference type="GO" id="GO:0031071">
    <property type="term" value="F:cysteine desulfurase activity"/>
    <property type="evidence" value="ECO:0007669"/>
    <property type="project" value="UniProtKB-UniRule"/>
</dbReference>
<dbReference type="GO" id="GO:0046872">
    <property type="term" value="F:metal ion binding"/>
    <property type="evidence" value="ECO:0007669"/>
    <property type="project" value="UniProtKB-KW"/>
</dbReference>
<dbReference type="GO" id="GO:0030170">
    <property type="term" value="F:pyridoxal phosphate binding"/>
    <property type="evidence" value="ECO:0007669"/>
    <property type="project" value="UniProtKB-UniRule"/>
</dbReference>
<dbReference type="GO" id="GO:0044571">
    <property type="term" value="P:[2Fe-2S] cluster assembly"/>
    <property type="evidence" value="ECO:0007669"/>
    <property type="project" value="UniProtKB-UniRule"/>
</dbReference>
<dbReference type="FunFam" id="3.40.640.10:FF:000003">
    <property type="entry name" value="Cysteine desulfurase IscS"/>
    <property type="match status" value="1"/>
</dbReference>
<dbReference type="FunFam" id="3.90.1150.10:FF:000002">
    <property type="entry name" value="Cysteine desulfurase IscS"/>
    <property type="match status" value="1"/>
</dbReference>
<dbReference type="Gene3D" id="3.90.1150.10">
    <property type="entry name" value="Aspartate Aminotransferase, domain 1"/>
    <property type="match status" value="1"/>
</dbReference>
<dbReference type="Gene3D" id="3.40.640.10">
    <property type="entry name" value="Type I PLP-dependent aspartate aminotransferase-like (Major domain)"/>
    <property type="match status" value="1"/>
</dbReference>
<dbReference type="HAMAP" id="MF_00331">
    <property type="entry name" value="Cys_desulf_IscS"/>
    <property type="match status" value="1"/>
</dbReference>
<dbReference type="InterPro" id="IPR000192">
    <property type="entry name" value="Aminotrans_V_dom"/>
</dbReference>
<dbReference type="InterPro" id="IPR020578">
    <property type="entry name" value="Aminotrans_V_PyrdxlP_BS"/>
</dbReference>
<dbReference type="InterPro" id="IPR010240">
    <property type="entry name" value="Cys_deSase_IscS"/>
</dbReference>
<dbReference type="InterPro" id="IPR016454">
    <property type="entry name" value="Cysteine_dSase"/>
</dbReference>
<dbReference type="InterPro" id="IPR015424">
    <property type="entry name" value="PyrdxlP-dep_Trfase"/>
</dbReference>
<dbReference type="InterPro" id="IPR015421">
    <property type="entry name" value="PyrdxlP-dep_Trfase_major"/>
</dbReference>
<dbReference type="InterPro" id="IPR015422">
    <property type="entry name" value="PyrdxlP-dep_Trfase_small"/>
</dbReference>
<dbReference type="NCBIfam" id="TIGR02006">
    <property type="entry name" value="IscS"/>
    <property type="match status" value="1"/>
</dbReference>
<dbReference type="NCBIfam" id="NF002806">
    <property type="entry name" value="PRK02948.1"/>
    <property type="match status" value="1"/>
</dbReference>
<dbReference type="NCBIfam" id="NF010611">
    <property type="entry name" value="PRK14012.1"/>
    <property type="match status" value="1"/>
</dbReference>
<dbReference type="PANTHER" id="PTHR11601:SF34">
    <property type="entry name" value="CYSTEINE DESULFURASE"/>
    <property type="match status" value="1"/>
</dbReference>
<dbReference type="PANTHER" id="PTHR11601">
    <property type="entry name" value="CYSTEINE DESULFURYLASE FAMILY MEMBER"/>
    <property type="match status" value="1"/>
</dbReference>
<dbReference type="Pfam" id="PF00266">
    <property type="entry name" value="Aminotran_5"/>
    <property type="match status" value="1"/>
</dbReference>
<dbReference type="PIRSF" id="PIRSF005572">
    <property type="entry name" value="NifS"/>
    <property type="match status" value="1"/>
</dbReference>
<dbReference type="SUPFAM" id="SSF53383">
    <property type="entry name" value="PLP-dependent transferases"/>
    <property type="match status" value="1"/>
</dbReference>
<dbReference type="PROSITE" id="PS00595">
    <property type="entry name" value="AA_TRANSFER_CLASS_5"/>
    <property type="match status" value="1"/>
</dbReference>
<comment type="function">
    <text evidence="1">Master enzyme that delivers sulfur to a number of partners involved in Fe-S cluster assembly, tRNA modification or cofactor biosynthesis. Catalyzes the removal of elemental sulfur atoms from cysteine to produce alanine. Functions as a sulfur delivery protein for Fe-S cluster synthesis onto IscU, an Fe-S scaffold assembly protein, as well as other S acceptor proteins.</text>
</comment>
<comment type="catalytic activity">
    <reaction evidence="1">
        <text>(sulfur carrier)-H + L-cysteine = (sulfur carrier)-SH + L-alanine</text>
        <dbReference type="Rhea" id="RHEA:43892"/>
        <dbReference type="Rhea" id="RHEA-COMP:14737"/>
        <dbReference type="Rhea" id="RHEA-COMP:14739"/>
        <dbReference type="ChEBI" id="CHEBI:29917"/>
        <dbReference type="ChEBI" id="CHEBI:35235"/>
        <dbReference type="ChEBI" id="CHEBI:57972"/>
        <dbReference type="ChEBI" id="CHEBI:64428"/>
        <dbReference type="EC" id="2.8.1.7"/>
    </reaction>
</comment>
<comment type="cofactor">
    <cofactor evidence="1">
        <name>pyridoxal 5'-phosphate</name>
        <dbReference type="ChEBI" id="CHEBI:597326"/>
    </cofactor>
</comment>
<comment type="pathway">
    <text evidence="1">Cofactor biosynthesis; iron-sulfur cluster biosynthesis.</text>
</comment>
<comment type="subunit">
    <text evidence="1">Homodimer. Forms a heterotetramer with IscU, interacts with other sulfur acceptors.</text>
</comment>
<comment type="subcellular location">
    <subcellularLocation>
        <location evidence="1">Cytoplasm</location>
    </subcellularLocation>
</comment>
<comment type="similarity">
    <text evidence="1">Belongs to the class-V pyridoxal-phosphate-dependent aminotransferase family. NifS/IscS subfamily.</text>
</comment>
<gene>
    <name evidence="1" type="primary">iscS</name>
    <name type="ordered locus">ECA3237</name>
</gene>
<proteinExistence type="inferred from homology"/>
<keyword id="KW-0001">2Fe-2S</keyword>
<keyword id="KW-0963">Cytoplasm</keyword>
<keyword id="KW-0408">Iron</keyword>
<keyword id="KW-0411">Iron-sulfur</keyword>
<keyword id="KW-0479">Metal-binding</keyword>
<keyword id="KW-0663">Pyridoxal phosphate</keyword>
<keyword id="KW-1185">Reference proteome</keyword>
<keyword id="KW-0808">Transferase</keyword>
<reference key="1">
    <citation type="journal article" date="2004" name="Proc. Natl. Acad. Sci. U.S.A.">
        <title>Genome sequence of the enterobacterial phytopathogen Erwinia carotovora subsp. atroseptica and characterization of virulence factors.</title>
        <authorList>
            <person name="Bell K.S."/>
            <person name="Sebaihia M."/>
            <person name="Pritchard L."/>
            <person name="Holden M.T.G."/>
            <person name="Hyman L.J."/>
            <person name="Holeva M.C."/>
            <person name="Thomson N.R."/>
            <person name="Bentley S.D."/>
            <person name="Churcher L.J.C."/>
            <person name="Mungall K."/>
            <person name="Atkin R."/>
            <person name="Bason N."/>
            <person name="Brooks K."/>
            <person name="Chillingworth T."/>
            <person name="Clark K."/>
            <person name="Doggett J."/>
            <person name="Fraser A."/>
            <person name="Hance Z."/>
            <person name="Hauser H."/>
            <person name="Jagels K."/>
            <person name="Moule S."/>
            <person name="Norbertczak H."/>
            <person name="Ormond D."/>
            <person name="Price C."/>
            <person name="Quail M.A."/>
            <person name="Sanders M."/>
            <person name="Walker D."/>
            <person name="Whitehead S."/>
            <person name="Salmond G.P.C."/>
            <person name="Birch P.R.J."/>
            <person name="Parkhill J."/>
            <person name="Toth I.K."/>
        </authorList>
    </citation>
    <scope>NUCLEOTIDE SEQUENCE [LARGE SCALE GENOMIC DNA]</scope>
    <source>
        <strain>SCRI 1043 / ATCC BAA-672</strain>
    </source>
</reference>
<name>ISCS_PECAS</name>
<protein>
    <recommendedName>
        <fullName evidence="1">Cysteine desulfurase IscS</fullName>
        <ecNumber evidence="1">2.8.1.7</ecNumber>
    </recommendedName>
</protein>
<organism>
    <name type="scientific">Pectobacterium atrosepticum (strain SCRI 1043 / ATCC BAA-672)</name>
    <name type="common">Erwinia carotovora subsp. atroseptica</name>
    <dbReference type="NCBI Taxonomy" id="218491"/>
    <lineage>
        <taxon>Bacteria</taxon>
        <taxon>Pseudomonadati</taxon>
        <taxon>Pseudomonadota</taxon>
        <taxon>Gammaproteobacteria</taxon>
        <taxon>Enterobacterales</taxon>
        <taxon>Pectobacteriaceae</taxon>
        <taxon>Pectobacterium</taxon>
    </lineage>
</organism>
<accession>Q6D259</accession>